<evidence type="ECO:0000255" key="1">
    <source>
        <dbReference type="HAMAP-Rule" id="MF_00113"/>
    </source>
</evidence>
<dbReference type="EC" id="2.4.99.17" evidence="1"/>
<dbReference type="EMBL" id="CP000157">
    <property type="protein sequence ID" value="ABC63210.1"/>
    <property type="molecule type" value="Genomic_DNA"/>
</dbReference>
<dbReference type="RefSeq" id="WP_011414046.1">
    <property type="nucleotide sequence ID" value="NC_007722.1"/>
</dbReference>
<dbReference type="SMR" id="Q2NAT1"/>
<dbReference type="STRING" id="314225.ELI_05590"/>
<dbReference type="KEGG" id="eli:ELI_05590"/>
<dbReference type="eggNOG" id="COG0809">
    <property type="taxonomic scope" value="Bacteria"/>
</dbReference>
<dbReference type="HOGENOM" id="CLU_039110_1_1_5"/>
<dbReference type="OrthoDB" id="9805933at2"/>
<dbReference type="UniPathway" id="UPA00392"/>
<dbReference type="Proteomes" id="UP000008808">
    <property type="component" value="Chromosome"/>
</dbReference>
<dbReference type="GO" id="GO:0005737">
    <property type="term" value="C:cytoplasm"/>
    <property type="evidence" value="ECO:0007669"/>
    <property type="project" value="UniProtKB-SubCell"/>
</dbReference>
<dbReference type="GO" id="GO:0051075">
    <property type="term" value="F:S-adenosylmethionine:tRNA ribosyltransferase-isomerase activity"/>
    <property type="evidence" value="ECO:0007669"/>
    <property type="project" value="UniProtKB-EC"/>
</dbReference>
<dbReference type="GO" id="GO:0008616">
    <property type="term" value="P:queuosine biosynthetic process"/>
    <property type="evidence" value="ECO:0007669"/>
    <property type="project" value="UniProtKB-UniRule"/>
</dbReference>
<dbReference type="GO" id="GO:0002099">
    <property type="term" value="P:tRNA wobble guanine modification"/>
    <property type="evidence" value="ECO:0007669"/>
    <property type="project" value="TreeGrafter"/>
</dbReference>
<dbReference type="FunFam" id="3.40.1780.10:FF:000001">
    <property type="entry name" value="S-adenosylmethionine:tRNA ribosyltransferase-isomerase"/>
    <property type="match status" value="1"/>
</dbReference>
<dbReference type="Gene3D" id="2.40.10.240">
    <property type="entry name" value="QueA-like"/>
    <property type="match status" value="1"/>
</dbReference>
<dbReference type="Gene3D" id="3.40.1780.10">
    <property type="entry name" value="QueA-like"/>
    <property type="match status" value="1"/>
</dbReference>
<dbReference type="HAMAP" id="MF_00113">
    <property type="entry name" value="QueA"/>
    <property type="match status" value="1"/>
</dbReference>
<dbReference type="InterPro" id="IPR003699">
    <property type="entry name" value="QueA"/>
</dbReference>
<dbReference type="InterPro" id="IPR042118">
    <property type="entry name" value="QueA_dom1"/>
</dbReference>
<dbReference type="InterPro" id="IPR042119">
    <property type="entry name" value="QueA_dom2"/>
</dbReference>
<dbReference type="InterPro" id="IPR036100">
    <property type="entry name" value="QueA_sf"/>
</dbReference>
<dbReference type="NCBIfam" id="NF001140">
    <property type="entry name" value="PRK00147.1"/>
    <property type="match status" value="1"/>
</dbReference>
<dbReference type="NCBIfam" id="TIGR00113">
    <property type="entry name" value="queA"/>
    <property type="match status" value="1"/>
</dbReference>
<dbReference type="PANTHER" id="PTHR30307">
    <property type="entry name" value="S-ADENOSYLMETHIONINE:TRNA RIBOSYLTRANSFERASE-ISOMERASE"/>
    <property type="match status" value="1"/>
</dbReference>
<dbReference type="PANTHER" id="PTHR30307:SF0">
    <property type="entry name" value="S-ADENOSYLMETHIONINE:TRNA RIBOSYLTRANSFERASE-ISOMERASE"/>
    <property type="match status" value="1"/>
</dbReference>
<dbReference type="Pfam" id="PF02547">
    <property type="entry name" value="Queuosine_synth"/>
    <property type="match status" value="1"/>
</dbReference>
<dbReference type="SUPFAM" id="SSF111337">
    <property type="entry name" value="QueA-like"/>
    <property type="match status" value="1"/>
</dbReference>
<accession>Q2NAT1</accession>
<sequence>MRVDLFDFELPQELIALRPAVPRDSARLLVAAGAGAIDDRIVRDLPQLLMPGDVLVFNDTRVIPAQLTGKRGEATVGVTLHKRLDLRRWQAFVRNAKRLAPGDTVDFGNDVSADVEDRADDGSFTFAFRGDEPVEVLLDRAGTMPLPPYIAGKRATDERDRDDYQTMFAREDGAVAAPTAALHFTSELIAALDERGVARQTLTLHVGAGTFLPVKADDTDDHRMHSEWGRIEHDTADRLNAAKSRGGRIIAVGTTSLRLLESATGEDGVIRTFAGDTDIFITPGYRFRAVDGLMTNFHLPKSTLMMLVSALMGRERMMDIYAHAIAQRYRFYSYGDSSLLIPEGNTK</sequence>
<comment type="function">
    <text evidence="1">Transfers and isomerizes the ribose moiety from AdoMet to the 7-aminomethyl group of 7-deazaguanine (preQ1-tRNA) to give epoxyqueuosine (oQ-tRNA).</text>
</comment>
<comment type="catalytic activity">
    <reaction evidence="1">
        <text>7-aminomethyl-7-carbaguanosine(34) in tRNA + S-adenosyl-L-methionine = epoxyqueuosine(34) in tRNA + adenine + L-methionine + 2 H(+)</text>
        <dbReference type="Rhea" id="RHEA:32155"/>
        <dbReference type="Rhea" id="RHEA-COMP:10342"/>
        <dbReference type="Rhea" id="RHEA-COMP:18582"/>
        <dbReference type="ChEBI" id="CHEBI:15378"/>
        <dbReference type="ChEBI" id="CHEBI:16708"/>
        <dbReference type="ChEBI" id="CHEBI:57844"/>
        <dbReference type="ChEBI" id="CHEBI:59789"/>
        <dbReference type="ChEBI" id="CHEBI:82833"/>
        <dbReference type="ChEBI" id="CHEBI:194443"/>
        <dbReference type="EC" id="2.4.99.17"/>
    </reaction>
</comment>
<comment type="pathway">
    <text evidence="1">tRNA modification; tRNA-queuosine biosynthesis.</text>
</comment>
<comment type="subunit">
    <text evidence="1">Monomer.</text>
</comment>
<comment type="subcellular location">
    <subcellularLocation>
        <location evidence="1">Cytoplasm</location>
    </subcellularLocation>
</comment>
<comment type="similarity">
    <text evidence="1">Belongs to the QueA family.</text>
</comment>
<feature type="chain" id="PRO_1000015213" description="S-adenosylmethionine:tRNA ribosyltransferase-isomerase">
    <location>
        <begin position="1"/>
        <end position="347"/>
    </location>
</feature>
<reference key="1">
    <citation type="journal article" date="2009" name="J. Bacteriol.">
        <title>Complete genome sequence of Erythrobacter litoralis HTCC2594.</title>
        <authorList>
            <person name="Oh H.M."/>
            <person name="Giovannoni S.J."/>
            <person name="Ferriera S."/>
            <person name="Johnson J."/>
            <person name="Cho J.C."/>
        </authorList>
    </citation>
    <scope>NUCLEOTIDE SEQUENCE [LARGE SCALE GENOMIC DNA]</scope>
    <source>
        <strain>HTCC2594</strain>
    </source>
</reference>
<keyword id="KW-0963">Cytoplasm</keyword>
<keyword id="KW-0671">Queuosine biosynthesis</keyword>
<keyword id="KW-1185">Reference proteome</keyword>
<keyword id="KW-0949">S-adenosyl-L-methionine</keyword>
<keyword id="KW-0808">Transferase</keyword>
<gene>
    <name evidence="1" type="primary">queA</name>
    <name type="ordered locus">ELI_05590</name>
</gene>
<proteinExistence type="inferred from homology"/>
<organism>
    <name type="scientific">Erythrobacter litoralis (strain HTCC2594)</name>
    <dbReference type="NCBI Taxonomy" id="314225"/>
    <lineage>
        <taxon>Bacteria</taxon>
        <taxon>Pseudomonadati</taxon>
        <taxon>Pseudomonadota</taxon>
        <taxon>Alphaproteobacteria</taxon>
        <taxon>Sphingomonadales</taxon>
        <taxon>Erythrobacteraceae</taxon>
        <taxon>Erythrobacter/Porphyrobacter group</taxon>
        <taxon>Erythrobacter</taxon>
    </lineage>
</organism>
<protein>
    <recommendedName>
        <fullName evidence="1">S-adenosylmethionine:tRNA ribosyltransferase-isomerase</fullName>
        <ecNumber evidence="1">2.4.99.17</ecNumber>
    </recommendedName>
    <alternativeName>
        <fullName evidence="1">Queuosine biosynthesis protein QueA</fullName>
    </alternativeName>
</protein>
<name>QUEA_ERYLH</name>